<organism>
    <name type="scientific">Renibacterium salmoninarum (strain ATCC 33209 / DSM 20767 / JCM 11484 / NBRC 15589 / NCIMB 2235)</name>
    <dbReference type="NCBI Taxonomy" id="288705"/>
    <lineage>
        <taxon>Bacteria</taxon>
        <taxon>Bacillati</taxon>
        <taxon>Actinomycetota</taxon>
        <taxon>Actinomycetes</taxon>
        <taxon>Micrococcales</taxon>
        <taxon>Micrococcaceae</taxon>
        <taxon>Renibacterium</taxon>
    </lineage>
</organism>
<dbReference type="EC" id="5.3.1.16" evidence="1"/>
<dbReference type="EMBL" id="CP000910">
    <property type="protein sequence ID" value="ABY22486.1"/>
    <property type="molecule type" value="Genomic_DNA"/>
</dbReference>
<dbReference type="RefSeq" id="WP_012244185.1">
    <property type="nucleotide sequence ID" value="NC_010168.1"/>
</dbReference>
<dbReference type="SMR" id="A9WQA3"/>
<dbReference type="STRING" id="288705.RSal33209_0739"/>
<dbReference type="KEGG" id="rsa:RSal33209_0739"/>
<dbReference type="eggNOG" id="COG0106">
    <property type="taxonomic scope" value="Bacteria"/>
</dbReference>
<dbReference type="HOGENOM" id="CLU_048577_1_1_11"/>
<dbReference type="UniPathway" id="UPA00031">
    <property type="reaction ID" value="UER00009"/>
</dbReference>
<dbReference type="Proteomes" id="UP000002007">
    <property type="component" value="Chromosome"/>
</dbReference>
<dbReference type="GO" id="GO:0005737">
    <property type="term" value="C:cytoplasm"/>
    <property type="evidence" value="ECO:0007669"/>
    <property type="project" value="UniProtKB-SubCell"/>
</dbReference>
<dbReference type="GO" id="GO:0003949">
    <property type="term" value="F:1-(5-phosphoribosyl)-5-[(5-phosphoribosylamino)methylideneamino]imidazole-4-carboxamide isomerase activity"/>
    <property type="evidence" value="ECO:0007669"/>
    <property type="project" value="UniProtKB-UniRule"/>
</dbReference>
<dbReference type="GO" id="GO:0004640">
    <property type="term" value="F:phosphoribosylanthranilate isomerase activity"/>
    <property type="evidence" value="ECO:0007669"/>
    <property type="project" value="InterPro"/>
</dbReference>
<dbReference type="GO" id="GO:0000105">
    <property type="term" value="P:L-histidine biosynthetic process"/>
    <property type="evidence" value="ECO:0007669"/>
    <property type="project" value="UniProtKB-UniRule"/>
</dbReference>
<dbReference type="GO" id="GO:0000162">
    <property type="term" value="P:L-tryptophan biosynthetic process"/>
    <property type="evidence" value="ECO:0007669"/>
    <property type="project" value="InterPro"/>
</dbReference>
<dbReference type="CDD" id="cd04732">
    <property type="entry name" value="HisA"/>
    <property type="match status" value="1"/>
</dbReference>
<dbReference type="FunFam" id="3.20.20.70:FF:000009">
    <property type="entry name" value="1-(5-phosphoribosyl)-5-[(5-phosphoribosylamino)methylideneamino] imidazole-4-carboxamide isomerase"/>
    <property type="match status" value="1"/>
</dbReference>
<dbReference type="Gene3D" id="3.20.20.70">
    <property type="entry name" value="Aldolase class I"/>
    <property type="match status" value="1"/>
</dbReference>
<dbReference type="HAMAP" id="MF_01014">
    <property type="entry name" value="HisA"/>
    <property type="match status" value="1"/>
</dbReference>
<dbReference type="InterPro" id="IPR013785">
    <property type="entry name" value="Aldolase_TIM"/>
</dbReference>
<dbReference type="InterPro" id="IPR006062">
    <property type="entry name" value="His_biosynth"/>
</dbReference>
<dbReference type="InterPro" id="IPR010188">
    <property type="entry name" value="HisA/PriA_Actinobacteria"/>
</dbReference>
<dbReference type="InterPro" id="IPR044524">
    <property type="entry name" value="Isoase_HisA-like"/>
</dbReference>
<dbReference type="InterPro" id="IPR023016">
    <property type="entry name" value="Isoase_HisA-like_bact"/>
</dbReference>
<dbReference type="InterPro" id="IPR011060">
    <property type="entry name" value="RibuloseP-bd_barrel"/>
</dbReference>
<dbReference type="NCBIfam" id="TIGR01919">
    <property type="entry name" value="hisA-trpF"/>
    <property type="match status" value="1"/>
</dbReference>
<dbReference type="PANTHER" id="PTHR43090">
    <property type="entry name" value="1-(5-PHOSPHORIBOSYL)-5-[(5-PHOSPHORIBOSYLAMINO)METHYLIDENEAMINO] IMIDAZOLE-4-CARBOXAMIDE ISOMERASE"/>
    <property type="match status" value="1"/>
</dbReference>
<dbReference type="PANTHER" id="PTHR43090:SF2">
    <property type="entry name" value="1-(5-PHOSPHORIBOSYL)-5-[(5-PHOSPHORIBOSYLAMINO)METHYLIDENEAMINO] IMIDAZOLE-4-CARBOXAMIDE ISOMERASE"/>
    <property type="match status" value="1"/>
</dbReference>
<dbReference type="Pfam" id="PF00977">
    <property type="entry name" value="His_biosynth"/>
    <property type="match status" value="1"/>
</dbReference>
<dbReference type="SUPFAM" id="SSF51366">
    <property type="entry name" value="Ribulose-phoshate binding barrel"/>
    <property type="match status" value="1"/>
</dbReference>
<keyword id="KW-0028">Amino-acid biosynthesis</keyword>
<keyword id="KW-0963">Cytoplasm</keyword>
<keyword id="KW-0368">Histidine biosynthesis</keyword>
<keyword id="KW-0413">Isomerase</keyword>
<keyword id="KW-1185">Reference proteome</keyword>
<feature type="chain" id="PRO_1000084106" description="1-(5-phosphoribosyl)-5-[(5-phosphoribosylamino)methylideneamino] imidazole-4-carboxamide isomerase">
    <location>
        <begin position="1"/>
        <end position="244"/>
    </location>
</feature>
<feature type="active site" description="Proton acceptor" evidence="1">
    <location>
        <position position="13"/>
    </location>
</feature>
<feature type="active site" description="Proton donor" evidence="1">
    <location>
        <position position="132"/>
    </location>
</feature>
<comment type="catalytic activity">
    <reaction evidence="1">
        <text>1-(5-phospho-beta-D-ribosyl)-5-[(5-phospho-beta-D-ribosylamino)methylideneamino]imidazole-4-carboxamide = 5-[(5-phospho-1-deoxy-D-ribulos-1-ylimino)methylamino]-1-(5-phospho-beta-D-ribosyl)imidazole-4-carboxamide</text>
        <dbReference type="Rhea" id="RHEA:15469"/>
        <dbReference type="ChEBI" id="CHEBI:58435"/>
        <dbReference type="ChEBI" id="CHEBI:58525"/>
        <dbReference type="EC" id="5.3.1.16"/>
    </reaction>
</comment>
<comment type="pathway">
    <text evidence="1">Amino-acid biosynthesis; L-histidine biosynthesis; L-histidine from 5-phospho-alpha-D-ribose 1-diphosphate: step 4/9.</text>
</comment>
<comment type="subcellular location">
    <subcellularLocation>
        <location evidence="1">Cytoplasm</location>
    </subcellularLocation>
</comment>
<comment type="similarity">
    <text evidence="1">Belongs to the HisA/HisF family.</text>
</comment>
<sequence length="244" mass="25819">MTEMILELLPAVDVADGQAVRLVQGEAGSETSYGAPIDAALAWQQDGAEWVHLVDLDAAFDRGSNLALLRDVVAQLNVKVELSGGIRDDASLEGALKLGAERVNLGTAALEDPVWTARAIERFGDKIAVGLDVRGTTLAARGWTKDGGDLWEVLARLEDAGCARYVVTDVTKDGTLRGPNIELLQQMLERTDRPVVASGGVSSLDDLVQLRALVPHGLEGAIVGKALYAGAFTLPEALDVAGRR</sequence>
<reference key="1">
    <citation type="journal article" date="2008" name="J. Bacteriol.">
        <title>Genome sequence of the fish pathogen Renibacterium salmoninarum suggests reductive evolution away from an environmental Arthrobacter ancestor.</title>
        <authorList>
            <person name="Wiens G.D."/>
            <person name="Rockey D.D."/>
            <person name="Wu Z."/>
            <person name="Chang J."/>
            <person name="Levy R."/>
            <person name="Crane S."/>
            <person name="Chen D.S."/>
            <person name="Capri G.R."/>
            <person name="Burnett J.R."/>
            <person name="Sudheesh P.S."/>
            <person name="Schipma M.J."/>
            <person name="Burd H."/>
            <person name="Bhattacharyya A."/>
            <person name="Rhodes L.D."/>
            <person name="Kaul R."/>
            <person name="Strom M.S."/>
        </authorList>
    </citation>
    <scope>NUCLEOTIDE SEQUENCE [LARGE SCALE GENOMIC DNA]</scope>
    <source>
        <strain>ATCC 33209 / DSM 20767 / JCM 11484 / NBRC 15589 / NCIMB 2235</strain>
    </source>
</reference>
<gene>
    <name evidence="1" type="primary">hisA</name>
    <name type="ordered locus">RSal33209_0739</name>
</gene>
<protein>
    <recommendedName>
        <fullName evidence="1">1-(5-phosphoribosyl)-5-[(5-phosphoribosylamino)methylideneamino] imidazole-4-carboxamide isomerase</fullName>
        <ecNumber evidence="1">5.3.1.16</ecNumber>
    </recommendedName>
    <alternativeName>
        <fullName evidence="1">Phosphoribosylformimino-5-aminoimidazole carboxamide ribotide isomerase</fullName>
    </alternativeName>
</protein>
<name>HIS4_RENSM</name>
<proteinExistence type="inferred from homology"/>
<accession>A9WQA3</accession>
<evidence type="ECO:0000255" key="1">
    <source>
        <dbReference type="HAMAP-Rule" id="MF_01014"/>
    </source>
</evidence>